<name>TAL_BARBK</name>
<sequence length="217" mass="23109">MKFFVDSANCEDIQELQNLGLVDGVTTNPSLILQSGRNILDVIQEICSLVEGPVSAEVAATDFDTMMKEAAVLAKIANNICIKLPITLDGLKACKALSEQELKTNLTLCFSATQALLAAKAGATFVSPFIGRIDDCGTNGIDLLHEIRTIYDNYGFATQILAASIRTTTHVKEAALSGADVATVPPKVLKSLAAHPLTDKGLQTFLTDWAKTGQKIA</sequence>
<keyword id="KW-0963">Cytoplasm</keyword>
<keyword id="KW-0570">Pentose shunt</keyword>
<keyword id="KW-0704">Schiff base</keyword>
<keyword id="KW-0808">Transferase</keyword>
<protein>
    <recommendedName>
        <fullName evidence="1">Probable transaldolase</fullName>
        <ecNumber evidence="1">2.2.1.2</ecNumber>
    </recommendedName>
</protein>
<reference key="1">
    <citation type="submission" date="2006-12" db="EMBL/GenBank/DDBJ databases">
        <authorList>
            <person name="Hendrix L."/>
            <person name="Mohamoud Y."/>
            <person name="Radune D."/>
            <person name="Shvartsbeyn A."/>
            <person name="Daugherty S."/>
            <person name="Dodson R."/>
            <person name="Durkin A.S."/>
            <person name="Harkins D."/>
            <person name="Huot H."/>
            <person name="Kothari S.P."/>
            <person name="Madupu R."/>
            <person name="Li J."/>
            <person name="Nelson W.C."/>
            <person name="Shrivastava S."/>
            <person name="Giglio M.G."/>
            <person name="Haft D."/>
            <person name="Selengut J."/>
            <person name="Fraser-Ligget C."/>
            <person name="Seshadri R."/>
        </authorList>
    </citation>
    <scope>NUCLEOTIDE SEQUENCE [LARGE SCALE GENOMIC DNA]</scope>
    <source>
        <strain>ATCC 35685 / KC583 / Herrer 020/F12,63</strain>
    </source>
</reference>
<comment type="function">
    <text evidence="1">Transaldolase is important for the balance of metabolites in the pentose-phosphate pathway.</text>
</comment>
<comment type="catalytic activity">
    <reaction evidence="1">
        <text>D-sedoheptulose 7-phosphate + D-glyceraldehyde 3-phosphate = D-erythrose 4-phosphate + beta-D-fructose 6-phosphate</text>
        <dbReference type="Rhea" id="RHEA:17053"/>
        <dbReference type="ChEBI" id="CHEBI:16897"/>
        <dbReference type="ChEBI" id="CHEBI:57483"/>
        <dbReference type="ChEBI" id="CHEBI:57634"/>
        <dbReference type="ChEBI" id="CHEBI:59776"/>
        <dbReference type="EC" id="2.2.1.2"/>
    </reaction>
</comment>
<comment type="pathway">
    <text evidence="1">Carbohydrate degradation; pentose phosphate pathway; D-glyceraldehyde 3-phosphate and beta-D-fructose 6-phosphate from D-ribose 5-phosphate and D-xylulose 5-phosphate (non-oxidative stage): step 2/3.</text>
</comment>
<comment type="subcellular location">
    <subcellularLocation>
        <location evidence="1">Cytoplasm</location>
    </subcellularLocation>
</comment>
<comment type="similarity">
    <text evidence="1">Belongs to the transaldolase family. Type 3B subfamily.</text>
</comment>
<organism>
    <name type="scientific">Bartonella bacilliformis (strain ATCC 35685 / KC583 / Herrer 020/F12,63)</name>
    <dbReference type="NCBI Taxonomy" id="360095"/>
    <lineage>
        <taxon>Bacteria</taxon>
        <taxon>Pseudomonadati</taxon>
        <taxon>Pseudomonadota</taxon>
        <taxon>Alphaproteobacteria</taxon>
        <taxon>Hyphomicrobiales</taxon>
        <taxon>Bartonellaceae</taxon>
        <taxon>Bartonella</taxon>
    </lineage>
</organism>
<gene>
    <name evidence="1" type="primary">tal</name>
    <name type="ordered locus">BARBAKC583_0106</name>
</gene>
<feature type="chain" id="PRO_1000126280" description="Probable transaldolase">
    <location>
        <begin position="1"/>
        <end position="217"/>
    </location>
</feature>
<feature type="active site" description="Schiff-base intermediate with substrate" evidence="1">
    <location>
        <position position="83"/>
    </location>
</feature>
<evidence type="ECO:0000255" key="1">
    <source>
        <dbReference type="HAMAP-Rule" id="MF_00494"/>
    </source>
</evidence>
<dbReference type="EC" id="2.2.1.2" evidence="1"/>
<dbReference type="EMBL" id="CP000524">
    <property type="protein sequence ID" value="ABM45436.1"/>
    <property type="molecule type" value="Genomic_DNA"/>
</dbReference>
<dbReference type="SMR" id="A1UR41"/>
<dbReference type="STRING" id="360095.BARBAKC583_0106"/>
<dbReference type="GeneID" id="4684100"/>
<dbReference type="KEGG" id="bbk:BARBAKC583_0106"/>
<dbReference type="PATRIC" id="fig|360095.6.peg.106"/>
<dbReference type="eggNOG" id="COG0176">
    <property type="taxonomic scope" value="Bacteria"/>
</dbReference>
<dbReference type="HOGENOM" id="CLU_079764_0_0_5"/>
<dbReference type="OrthoDB" id="9807051at2"/>
<dbReference type="UniPathway" id="UPA00115">
    <property type="reaction ID" value="UER00414"/>
</dbReference>
<dbReference type="Proteomes" id="UP000000643">
    <property type="component" value="Chromosome"/>
</dbReference>
<dbReference type="GO" id="GO:0005737">
    <property type="term" value="C:cytoplasm"/>
    <property type="evidence" value="ECO:0007669"/>
    <property type="project" value="UniProtKB-SubCell"/>
</dbReference>
<dbReference type="GO" id="GO:0016832">
    <property type="term" value="F:aldehyde-lyase activity"/>
    <property type="evidence" value="ECO:0007669"/>
    <property type="project" value="InterPro"/>
</dbReference>
<dbReference type="GO" id="GO:0004801">
    <property type="term" value="F:transaldolase activity"/>
    <property type="evidence" value="ECO:0007669"/>
    <property type="project" value="UniProtKB-UniRule"/>
</dbReference>
<dbReference type="GO" id="GO:0005975">
    <property type="term" value="P:carbohydrate metabolic process"/>
    <property type="evidence" value="ECO:0007669"/>
    <property type="project" value="InterPro"/>
</dbReference>
<dbReference type="GO" id="GO:0006098">
    <property type="term" value="P:pentose-phosphate shunt"/>
    <property type="evidence" value="ECO:0007669"/>
    <property type="project" value="UniProtKB-UniRule"/>
</dbReference>
<dbReference type="CDD" id="cd00956">
    <property type="entry name" value="Transaldolase_FSA"/>
    <property type="match status" value="1"/>
</dbReference>
<dbReference type="FunFam" id="3.20.20.70:FF:000018">
    <property type="entry name" value="Probable transaldolase"/>
    <property type="match status" value="1"/>
</dbReference>
<dbReference type="Gene3D" id="3.20.20.70">
    <property type="entry name" value="Aldolase class I"/>
    <property type="match status" value="1"/>
</dbReference>
<dbReference type="HAMAP" id="MF_00494">
    <property type="entry name" value="Transaldolase_3b"/>
    <property type="match status" value="1"/>
</dbReference>
<dbReference type="InterPro" id="IPR013785">
    <property type="entry name" value="Aldolase_TIM"/>
</dbReference>
<dbReference type="InterPro" id="IPR001585">
    <property type="entry name" value="TAL/FSA"/>
</dbReference>
<dbReference type="InterPro" id="IPR022999">
    <property type="entry name" value="Transaldolase_3B"/>
</dbReference>
<dbReference type="InterPro" id="IPR004731">
    <property type="entry name" value="Transaldolase_3B/F6P_aldolase"/>
</dbReference>
<dbReference type="InterPro" id="IPR018225">
    <property type="entry name" value="Transaldolase_AS"/>
</dbReference>
<dbReference type="InterPro" id="IPR033919">
    <property type="entry name" value="TSA/FSA_arc/bac"/>
</dbReference>
<dbReference type="NCBIfam" id="TIGR00875">
    <property type="entry name" value="fsa_talC_mipB"/>
    <property type="match status" value="1"/>
</dbReference>
<dbReference type="PANTHER" id="PTHR10683:SF40">
    <property type="entry name" value="FRUCTOSE-6-PHOSPHATE ALDOLASE 1-RELATED"/>
    <property type="match status" value="1"/>
</dbReference>
<dbReference type="PANTHER" id="PTHR10683">
    <property type="entry name" value="TRANSALDOLASE"/>
    <property type="match status" value="1"/>
</dbReference>
<dbReference type="Pfam" id="PF00923">
    <property type="entry name" value="TAL_FSA"/>
    <property type="match status" value="1"/>
</dbReference>
<dbReference type="SUPFAM" id="SSF51569">
    <property type="entry name" value="Aldolase"/>
    <property type="match status" value="1"/>
</dbReference>
<dbReference type="PROSITE" id="PS01054">
    <property type="entry name" value="TRANSALDOLASE_1"/>
    <property type="match status" value="1"/>
</dbReference>
<dbReference type="PROSITE" id="PS00958">
    <property type="entry name" value="TRANSALDOLASE_2"/>
    <property type="match status" value="1"/>
</dbReference>
<accession>A1UR41</accession>
<proteinExistence type="inferred from homology"/>